<accession>B7LUS6</accession>
<name>ZAPB_ESCF3</name>
<proteinExistence type="inferred from homology"/>
<keyword id="KW-0007">Acetylation</keyword>
<keyword id="KW-0131">Cell cycle</keyword>
<keyword id="KW-0132">Cell division</keyword>
<keyword id="KW-0175">Coiled coil</keyword>
<keyword id="KW-0963">Cytoplasm</keyword>
<keyword id="KW-0717">Septation</keyword>
<comment type="function">
    <text evidence="1">Non-essential, abundant cell division factor that is required for proper Z-ring formation. It is recruited early to the divisome by direct interaction with FtsZ, stimulating Z-ring assembly and thereby promoting cell division earlier in the cell cycle. Its recruitment to the Z-ring requires functional FtsA or ZipA.</text>
</comment>
<comment type="subunit">
    <text evidence="1">Homodimer. The ends of the coiled-coil dimer bind to each other, forming polymers. Interacts with FtsZ.</text>
</comment>
<comment type="subcellular location">
    <subcellularLocation>
        <location evidence="1">Cytoplasm</location>
    </subcellularLocation>
    <text evidence="1">Localizes to the septum at mid-cell, in a FtsZ-like pattern.</text>
</comment>
<comment type="similarity">
    <text evidence="1">Belongs to the ZapB family.</text>
</comment>
<organism>
    <name type="scientific">Escherichia fergusonii (strain ATCC 35469 / DSM 13698 / CCUG 18766 / IAM 14443 / JCM 21226 / LMG 7866 / NBRC 102419 / NCTC 12128 / CDC 0568-73)</name>
    <dbReference type="NCBI Taxonomy" id="585054"/>
    <lineage>
        <taxon>Bacteria</taxon>
        <taxon>Pseudomonadati</taxon>
        <taxon>Pseudomonadota</taxon>
        <taxon>Gammaproteobacteria</taxon>
        <taxon>Enterobacterales</taxon>
        <taxon>Enterobacteriaceae</taxon>
        <taxon>Escherichia</taxon>
    </lineage>
</organism>
<gene>
    <name evidence="1" type="primary">zapB</name>
    <name type="ordered locus">EFER_3844</name>
</gene>
<reference key="1">
    <citation type="journal article" date="2009" name="PLoS Genet.">
        <title>Organised genome dynamics in the Escherichia coli species results in highly diverse adaptive paths.</title>
        <authorList>
            <person name="Touchon M."/>
            <person name="Hoede C."/>
            <person name="Tenaillon O."/>
            <person name="Barbe V."/>
            <person name="Baeriswyl S."/>
            <person name="Bidet P."/>
            <person name="Bingen E."/>
            <person name="Bonacorsi S."/>
            <person name="Bouchier C."/>
            <person name="Bouvet O."/>
            <person name="Calteau A."/>
            <person name="Chiapello H."/>
            <person name="Clermont O."/>
            <person name="Cruveiller S."/>
            <person name="Danchin A."/>
            <person name="Diard M."/>
            <person name="Dossat C."/>
            <person name="Karoui M.E."/>
            <person name="Frapy E."/>
            <person name="Garry L."/>
            <person name="Ghigo J.M."/>
            <person name="Gilles A.M."/>
            <person name="Johnson J."/>
            <person name="Le Bouguenec C."/>
            <person name="Lescat M."/>
            <person name="Mangenot S."/>
            <person name="Martinez-Jehanne V."/>
            <person name="Matic I."/>
            <person name="Nassif X."/>
            <person name="Oztas S."/>
            <person name="Petit M.A."/>
            <person name="Pichon C."/>
            <person name="Rouy Z."/>
            <person name="Ruf C.S."/>
            <person name="Schneider D."/>
            <person name="Tourret J."/>
            <person name="Vacherie B."/>
            <person name="Vallenet D."/>
            <person name="Medigue C."/>
            <person name="Rocha E.P.C."/>
            <person name="Denamur E."/>
        </authorList>
    </citation>
    <scope>NUCLEOTIDE SEQUENCE [LARGE SCALE GENOMIC DNA]</scope>
    <source>
        <strain>ATCC 35469 / DSM 13698 / BCRC 15582 / CCUG 18766 / IAM 14443 / JCM 21226 / LMG 7866 / NBRC 102419 / NCTC 12128 / CDC 0568-73</strain>
    </source>
</reference>
<protein>
    <recommendedName>
        <fullName evidence="1">Cell division protein ZapB</fullName>
    </recommendedName>
</protein>
<evidence type="ECO:0000255" key="1">
    <source>
        <dbReference type="HAMAP-Rule" id="MF_01196"/>
    </source>
</evidence>
<evidence type="ECO:0000256" key="2">
    <source>
        <dbReference type="SAM" id="MobiDB-lite"/>
    </source>
</evidence>
<sequence>MTMSLEVFEKLEAKVQQAIDTITLLQMEIEELKEKNNSLSQEVQNAQHQREELERENNHLKEQQNGWQERLQALLGRMEEV</sequence>
<feature type="chain" id="PRO_1000138439" description="Cell division protein ZapB">
    <location>
        <begin position="1"/>
        <end position="81"/>
    </location>
</feature>
<feature type="region of interest" description="Disordered" evidence="2">
    <location>
        <begin position="36"/>
        <end position="67"/>
    </location>
</feature>
<feature type="coiled-coil region" evidence="1">
    <location>
        <begin position="5"/>
        <end position="81"/>
    </location>
</feature>
<feature type="compositionally biased region" description="Polar residues" evidence="2">
    <location>
        <begin position="37"/>
        <end position="47"/>
    </location>
</feature>
<feature type="compositionally biased region" description="Basic and acidic residues" evidence="2">
    <location>
        <begin position="48"/>
        <end position="62"/>
    </location>
</feature>
<feature type="modified residue" description="N6-acetyllysine" evidence="1">
    <location>
        <position position="10"/>
    </location>
</feature>
<dbReference type="EMBL" id="CU928158">
    <property type="protein sequence ID" value="CAQ91279.1"/>
    <property type="molecule type" value="Genomic_DNA"/>
</dbReference>
<dbReference type="RefSeq" id="WP_001296623.1">
    <property type="nucleotide sequence ID" value="NC_011740.1"/>
</dbReference>
<dbReference type="SMR" id="B7LUS6"/>
<dbReference type="GeneID" id="93777970"/>
<dbReference type="KEGG" id="efe:EFER_3844"/>
<dbReference type="HOGENOM" id="CLU_171174_2_0_6"/>
<dbReference type="OrthoDB" id="6554593at2"/>
<dbReference type="Proteomes" id="UP000000745">
    <property type="component" value="Chromosome"/>
</dbReference>
<dbReference type="GO" id="GO:0005737">
    <property type="term" value="C:cytoplasm"/>
    <property type="evidence" value="ECO:0007669"/>
    <property type="project" value="UniProtKB-SubCell"/>
</dbReference>
<dbReference type="GO" id="GO:0000917">
    <property type="term" value="P:division septum assembly"/>
    <property type="evidence" value="ECO:0007669"/>
    <property type="project" value="UniProtKB-KW"/>
</dbReference>
<dbReference type="GO" id="GO:0043093">
    <property type="term" value="P:FtsZ-dependent cytokinesis"/>
    <property type="evidence" value="ECO:0007669"/>
    <property type="project" value="UniProtKB-UniRule"/>
</dbReference>
<dbReference type="FunFam" id="1.20.5.340:FF:000014">
    <property type="entry name" value="Cell division protein ZapB"/>
    <property type="match status" value="1"/>
</dbReference>
<dbReference type="Gene3D" id="1.20.5.340">
    <property type="match status" value="1"/>
</dbReference>
<dbReference type="HAMAP" id="MF_01196">
    <property type="entry name" value="ZapB"/>
    <property type="match status" value="1"/>
</dbReference>
<dbReference type="InterPro" id="IPR009252">
    <property type="entry name" value="Cell_div_ZapB"/>
</dbReference>
<dbReference type="NCBIfam" id="NF011951">
    <property type="entry name" value="PRK15422.1"/>
    <property type="match status" value="1"/>
</dbReference>
<dbReference type="Pfam" id="PF06005">
    <property type="entry name" value="ZapB"/>
    <property type="match status" value="1"/>
</dbReference>